<protein>
    <recommendedName>
        <fullName evidence="9">Transducer of Cdc42-dependent actin assembly protein 2 homolog</fullName>
    </recommendedName>
</protein>
<keyword id="KW-0025">Alternative splicing</keyword>
<keyword id="KW-0965">Cell junction</keyword>
<keyword id="KW-1003">Cell membrane</keyword>
<keyword id="KW-0175">Coiled coil</keyword>
<keyword id="KW-0963">Cytoplasm</keyword>
<keyword id="KW-0968">Cytoplasmic vesicle</keyword>
<keyword id="KW-0254">Endocytosis</keyword>
<keyword id="KW-0967">Endosome</keyword>
<keyword id="KW-0472">Membrane</keyword>
<keyword id="KW-1185">Reference proteome</keyword>
<keyword id="KW-0728">SH3 domain</keyword>
<reference evidence="10" key="1">
    <citation type="journal article" date="1998" name="Science">
        <title>Genome sequence of the nematode C. elegans: a platform for investigating biology.</title>
        <authorList>
            <consortium name="The C. elegans sequencing consortium"/>
        </authorList>
    </citation>
    <scope>NUCLEOTIDE SEQUENCE [LARGE SCALE GENOMIC DNA]</scope>
    <source>
        <strain evidence="10">Bristol N2</strain>
    </source>
</reference>
<reference evidence="9" key="2">
    <citation type="journal article" date="2009" name="PLoS Genet.">
        <title>Requirements for F-BAR proteins TOCA-1 and TOCA-2 in actin dynamics and membrane trafficking during Caenorhabditis elegans oocyte growth and embryonic epidermal morphogenesis.</title>
        <authorList>
            <person name="Giuliani C."/>
            <person name="Troglio F."/>
            <person name="Bai Z."/>
            <person name="Patel F.B."/>
            <person name="Zucconi A."/>
            <person name="Malabarba M.G."/>
            <person name="Disanza A."/>
            <person name="Stradal T.B."/>
            <person name="Cassata G."/>
            <person name="Confalonieri S."/>
            <person name="Hardin J.D."/>
            <person name="Soto M.C."/>
            <person name="Grant B.D."/>
            <person name="Scita G."/>
        </authorList>
    </citation>
    <scope>FUNCTION</scope>
    <scope>INTERACTION WITH WSP-1 AND ABI-1</scope>
    <scope>SUBCELLULAR LOCATION</scope>
    <scope>DEVELOPMENTAL STAGE</scope>
    <scope>DISRUPTION PHENOTYPE</scope>
</reference>
<reference evidence="9" key="3">
    <citation type="journal article" date="2016" name="J. Mol. Cell Biol.">
        <title>Spatial control of active CDC-42 during collective migration of hypodermal cells in Caenorhabditis elegans.</title>
        <authorList>
            <person name="Ouellette M.H."/>
            <person name="Martin E."/>
            <person name="Lacoste-Caron G."/>
            <person name="Hamiche K."/>
            <person name="Jenna S."/>
        </authorList>
    </citation>
    <scope>FUNCTION</scope>
    <scope>DISRUPTION PHENOTYPE</scope>
</reference>
<reference evidence="9" key="4">
    <citation type="journal article" date="2015" name="Proc. Natl. Acad. Sci. U.S.A.">
        <title>A TOCA/CDC-42/PAR/WAVE functional module required for retrograde endocytic recycling.</title>
        <authorList>
            <person name="Bai Z."/>
            <person name="Grant B.D."/>
        </authorList>
    </citation>
    <scope>FUNCTION</scope>
    <scope>INTERACTION WITH CDC-42 AND WVE-1</scope>
    <scope>SUBCELLULAR LOCATION</scope>
    <scope>DISRUPTION PHENOTYPE</scope>
    <scope>MUTAGENESIS OF ILE-413 AND TRP-585</scope>
</reference>
<organism evidence="10">
    <name type="scientific">Caenorhabditis elegans</name>
    <dbReference type="NCBI Taxonomy" id="6239"/>
    <lineage>
        <taxon>Eukaryota</taxon>
        <taxon>Metazoa</taxon>
        <taxon>Ecdysozoa</taxon>
        <taxon>Nematoda</taxon>
        <taxon>Chromadorea</taxon>
        <taxon>Rhabditida</taxon>
        <taxon>Rhabditina</taxon>
        <taxon>Rhabditomorpha</taxon>
        <taxon>Rhabditoidea</taxon>
        <taxon>Rhabditidae</taxon>
        <taxon>Peloderinae</taxon>
        <taxon>Caenorhabditis</taxon>
    </lineage>
</organism>
<gene>
    <name evidence="12" type="primary">toca-2</name>
    <name evidence="12" type="ORF">K08E3.3</name>
</gene>
<feature type="chain" id="PRO_0000437444" description="Transducer of Cdc42-dependent actin assembly protein 2 homolog" evidence="9">
    <location>
        <begin position="1"/>
        <end position="610"/>
    </location>
</feature>
<feature type="domain" description="F-BAR" evidence="3">
    <location>
        <begin position="1"/>
        <end position="267"/>
    </location>
</feature>
<feature type="domain" description="REM-1" evidence="4">
    <location>
        <begin position="352"/>
        <end position="429"/>
    </location>
</feature>
<feature type="domain" description="SH3" evidence="2">
    <location>
        <begin position="547"/>
        <end position="610"/>
    </location>
</feature>
<feature type="region of interest" description="Disordered" evidence="5">
    <location>
        <begin position="283"/>
        <end position="315"/>
    </location>
</feature>
<feature type="region of interest" description="Disordered" evidence="5">
    <location>
        <begin position="436"/>
        <end position="487"/>
    </location>
</feature>
<feature type="region of interest" description="Disordered" evidence="5">
    <location>
        <begin position="499"/>
        <end position="519"/>
    </location>
</feature>
<feature type="coiled-coil region" evidence="1">
    <location>
        <begin position="355"/>
        <end position="385"/>
    </location>
</feature>
<feature type="compositionally biased region" description="Basic and acidic residues" evidence="5">
    <location>
        <begin position="291"/>
        <end position="302"/>
    </location>
</feature>
<feature type="compositionally biased region" description="Basic and acidic residues" evidence="5">
    <location>
        <begin position="437"/>
        <end position="449"/>
    </location>
</feature>
<feature type="compositionally biased region" description="Low complexity" evidence="5">
    <location>
        <begin position="453"/>
        <end position="464"/>
    </location>
</feature>
<feature type="compositionally biased region" description="Polar residues" evidence="5">
    <location>
        <begin position="475"/>
        <end position="487"/>
    </location>
</feature>
<feature type="compositionally biased region" description="Low complexity" evidence="5">
    <location>
        <begin position="501"/>
        <end position="513"/>
    </location>
</feature>
<feature type="splice variant" id="VSP_058523" description="In isoform a." evidence="9">
    <original>NCR</original>
    <variation>K</variation>
    <location>
        <begin position="590"/>
        <end position="592"/>
    </location>
</feature>
<feature type="mutagenesis site" description="Abolishes binding to cdc-42 and rescues the endosomal cargo sorting defect in the double toca-1 and toca-2 mutant." evidence="7">
    <original>I</original>
    <variation>S</variation>
    <location>
        <position position="413"/>
    </location>
</feature>
<feature type="mutagenesis site" description="Abolishes binding to wve-1 and rescues the endosomal cargo sorting defect in the double toca-1 and toca-2 mutant." evidence="7">
    <original>W</original>
    <variation>K</variation>
    <location>
        <position position="585"/>
    </location>
</feature>
<evidence type="ECO:0000255" key="1"/>
<evidence type="ECO:0000255" key="2">
    <source>
        <dbReference type="PROSITE-ProRule" id="PRU00192"/>
    </source>
</evidence>
<evidence type="ECO:0000255" key="3">
    <source>
        <dbReference type="PROSITE-ProRule" id="PRU01077"/>
    </source>
</evidence>
<evidence type="ECO:0000255" key="4">
    <source>
        <dbReference type="PROSITE-ProRule" id="PRU01207"/>
    </source>
</evidence>
<evidence type="ECO:0000256" key="5">
    <source>
        <dbReference type="SAM" id="MobiDB-lite"/>
    </source>
</evidence>
<evidence type="ECO:0000269" key="6">
    <source>
    </source>
</evidence>
<evidence type="ECO:0000269" key="7">
    <source>
    </source>
</evidence>
<evidence type="ECO:0000269" key="8">
    <source>
    </source>
</evidence>
<evidence type="ECO:0000305" key="9"/>
<evidence type="ECO:0000312" key="10">
    <source>
        <dbReference type="Proteomes" id="UP000001940"/>
    </source>
</evidence>
<evidence type="ECO:0000312" key="11">
    <source>
        <dbReference type="WormBase" id="K08E3.3a"/>
    </source>
</evidence>
<evidence type="ECO:0000312" key="12">
    <source>
        <dbReference type="WormBase" id="K08E3.3b"/>
    </source>
</evidence>
<accession>Q9XUS7</accession>
<accession>Q9U3B8</accession>
<name>TOCA2_CAEEL</name>
<comment type="function">
    <text evidence="6 7 8">Plays a role in protein trafficking, actin organization and embryonic morphogenesis (PubMed:19798448). Potentially acts as a cdc-42 effector (PubMed:25775511). May play a role in egg laying (PubMed:19798448). Together with toca-1, is required for protein trafficking regulating yolk protein clathrin-mediated endocytosis by oocytes during oogenesis and retrograde recycling and the sorting of recycling endosome cargo proteins such as mig-14 (PubMed:19798448, PubMed:25775511). Also, together with toca-2, controls the distribution of actin at cell junctions (PubMed:19798448, PubMed:26578656).</text>
</comment>
<comment type="subunit">
    <text evidence="6 7">Interacts (via SH3 domain) with wsp-1 and abi-1 (PubMed:19798448). Interacts with cdc-42 and (via SH3 domain) with wve-1 (PubMed:25775511).</text>
</comment>
<comment type="subcellular location">
    <subcellularLocation>
        <location evidence="6">Cell junction</location>
    </subcellularLocation>
    <subcellularLocation>
        <location evidence="6">Cell membrane</location>
        <topology evidence="6">Peripheral membrane protein</topology>
        <orientation evidence="6">Cytoplasmic side</orientation>
    </subcellularLocation>
    <subcellularLocation>
        <location evidence="6">Cytoplasmic vesicle</location>
    </subcellularLocation>
    <subcellularLocation>
        <location evidence="6">Cytoplasm</location>
    </subcellularLocation>
    <subcellularLocation>
        <location evidence="7">Recycling endosome</location>
    </subcellularLocation>
    <text evidence="6 7">Diffuse cytoplasmic localization (PubMed:19798448). Localizes to the rachis, which is the central core of the cytoplasm connecting developing oocytes in the syncytial gonad (PubMed:19798448). Co-localizes with toca-1 on recycling endosomes (PubMed:25775511).</text>
</comment>
<comment type="alternative products">
    <event type="alternative splicing"/>
    <isoform>
        <id>Q9XUS7-1</id>
        <name evidence="12">b</name>
        <sequence type="displayed"/>
    </isoform>
    <isoform>
        <id>Q9XUS7-2</id>
        <name evidence="11">a</name>
        <sequence type="described" ref="VSP_058523"/>
    </isoform>
</comment>
<comment type="developmental stage">
    <text evidence="6">Ubiquitously expressed in developing embryos.</text>
</comment>
<comment type="disruption phenotype">
    <text evidence="6 7 8">Double knockout with toca-1 results in nearly 100% of mutants with defective endocytosis by oocytes characterized by either reduced or non-detectable yolk protein in the oocytes and by an accumulation of aggregated yolk protein in the pseudocoelomatic space. Double knockout mutants with toca-1 also produce 20% fewer eggs compared to wild-type animals and there is some embryonic lethality whereby the dying embryos display defective morphogenesis including failed epidermal enclosure with extruding gut cells and increased width of the intestinal lumen (PubMed:19798448). This perhaps results from failed intercalation and migration of hypodermal cells and irregular protein trafficking as indicated by an accumulation of the cell junction protein ajm-1 and diffuse localization of actin at cell junctions (PubMed:19798448, PubMed:26578656). These double mutants also demonstrate defective endosomal sorting of recycling cargo proteins such as mig-14 (PubMed:25775511).</text>
</comment>
<comment type="similarity">
    <text evidence="9">Belongs to the FNBP1 family.</text>
</comment>
<sequence>MIPVSRFFTVQDPSNALLSYTQKGIDFFEKLGQFSKEKAAIEEEYSTKLRSLAKKYAKKSEEDDEILKSVSYTSSFNSFLQQLDQIATRHQTSAEHIRGGVVSYVASKTCQMRSSRKNAINDLKTINDKLEDQINEMCKSGKCYLKSFKDAENSYQKFYKADKNLEISRLELEKARALANARNEACELAKQDYSALVRKTNAEQKRYHVELLPVIFARLKAVDKECIADMRQVLQKIVSFDDSLADSTEECRKIMQREVGKIDAEGDAQLVLKSVEATIEQPAPFEIEDLGDPKNCDSRTNDSADGSGGKLLKSSPSKNRIIRNFLGILKEKEADEKPEASNNDQLMYTDKSKPAHVRLSCLRSKIRDMEKQLEQAIQGREGITRLQQAYYTNPQHGNPSACTEPLISYAKKIEKLKMDIHNLKEFYAMLEMSVEEGQERSFGGRDTPDTTRSMSGSSTNQSSSKTIEDVLSGEAGNSSSADDSSKNILRQLFTTPKRLISSPKTSKSSTPTPLRRRAEISSPKILRSSFSGAIRKSLSTPDSVKVETAVTVTALFEFAKSSAETMSIEQGEILLVLEHDHGDGWTRTKNCRKHNEESGFVPTSYLQFPQ</sequence>
<dbReference type="EMBL" id="BX284603">
    <property type="protein sequence ID" value="CAB04595.2"/>
    <property type="molecule type" value="Genomic_DNA"/>
</dbReference>
<dbReference type="EMBL" id="BX284603">
    <property type="protein sequence ID" value="CAB04591.2"/>
    <property type="molecule type" value="Genomic_DNA"/>
</dbReference>
<dbReference type="PIR" id="T23452">
    <property type="entry name" value="T23452"/>
</dbReference>
<dbReference type="PIR" id="T23456">
    <property type="entry name" value="T23456"/>
</dbReference>
<dbReference type="RefSeq" id="NP_499838.2">
    <molecule id="Q9XUS7-1"/>
    <property type="nucleotide sequence ID" value="NM_067437.6"/>
</dbReference>
<dbReference type="RefSeq" id="NP_499839.2">
    <molecule id="Q9XUS7-2"/>
    <property type="nucleotide sequence ID" value="NM_067438.5"/>
</dbReference>
<dbReference type="SMR" id="Q9XUS7"/>
<dbReference type="FunCoup" id="Q9XUS7">
    <property type="interactions" value="32"/>
</dbReference>
<dbReference type="IntAct" id="Q9XUS7">
    <property type="interactions" value="4"/>
</dbReference>
<dbReference type="STRING" id="6239.K08E3.3b.1"/>
<dbReference type="PaxDb" id="6239-K08E3.3b"/>
<dbReference type="EnsemblMetazoa" id="K08E3.3a.1">
    <molecule id="Q9XUS7-2"/>
    <property type="protein sequence ID" value="K08E3.3a.1"/>
    <property type="gene ID" value="WBGene00010663"/>
</dbReference>
<dbReference type="EnsemblMetazoa" id="K08E3.3b.1">
    <molecule id="Q9XUS7-1"/>
    <property type="protein sequence ID" value="K08E3.3b.1"/>
    <property type="gene ID" value="WBGene00010663"/>
</dbReference>
<dbReference type="GeneID" id="176812"/>
<dbReference type="KEGG" id="cel:CELE_K08E3.3"/>
<dbReference type="UCSC" id="K08E3.3a">
    <property type="organism name" value="c. elegans"/>
</dbReference>
<dbReference type="AGR" id="WB:WBGene00010663"/>
<dbReference type="CTD" id="176812"/>
<dbReference type="WormBase" id="K08E3.3a">
    <molecule id="Q9XUS7-2"/>
    <property type="protein sequence ID" value="CE37123"/>
    <property type="gene ID" value="WBGene00010663"/>
    <property type="gene designation" value="toca-2"/>
</dbReference>
<dbReference type="WormBase" id="K08E3.3b">
    <molecule id="Q9XUS7-1"/>
    <property type="protein sequence ID" value="CE37124"/>
    <property type="gene ID" value="WBGene00010663"/>
    <property type="gene designation" value="toca-2"/>
</dbReference>
<dbReference type="eggNOG" id="KOG3565">
    <property type="taxonomic scope" value="Eukaryota"/>
</dbReference>
<dbReference type="GeneTree" id="ENSGT00950000183047"/>
<dbReference type="HOGENOM" id="CLU_023320_2_0_1"/>
<dbReference type="InParanoid" id="Q9XUS7"/>
<dbReference type="OMA" id="AYQKFYK"/>
<dbReference type="OrthoDB" id="8783038at2759"/>
<dbReference type="PhylomeDB" id="Q9XUS7"/>
<dbReference type="Reactome" id="R-CEL-8856828">
    <property type="pathway name" value="Clathrin-mediated endocytosis"/>
</dbReference>
<dbReference type="Reactome" id="R-CEL-9013406">
    <property type="pathway name" value="RHOQ GTPase cycle"/>
</dbReference>
<dbReference type="PRO" id="PR:Q9XUS7"/>
<dbReference type="Proteomes" id="UP000001940">
    <property type="component" value="Chromosome III"/>
</dbReference>
<dbReference type="Bgee" id="WBGene00010663">
    <property type="expression patterns" value="Expressed in germ line (C elegans) and 3 other cell types or tissues"/>
</dbReference>
<dbReference type="GO" id="GO:0005911">
    <property type="term" value="C:cell-cell junction"/>
    <property type="evidence" value="ECO:0000314"/>
    <property type="project" value="UniProtKB"/>
</dbReference>
<dbReference type="GO" id="GO:0005737">
    <property type="term" value="C:cytoplasm"/>
    <property type="evidence" value="ECO:0000314"/>
    <property type="project" value="UniProtKB"/>
</dbReference>
<dbReference type="GO" id="GO:0097708">
    <property type="term" value="C:intracellular vesicle"/>
    <property type="evidence" value="ECO:0000314"/>
    <property type="project" value="UniProtKB"/>
</dbReference>
<dbReference type="GO" id="GO:0005886">
    <property type="term" value="C:plasma membrane"/>
    <property type="evidence" value="ECO:0000314"/>
    <property type="project" value="UniProtKB"/>
</dbReference>
<dbReference type="GO" id="GO:0055037">
    <property type="term" value="C:recycling endosome"/>
    <property type="evidence" value="ECO:0007669"/>
    <property type="project" value="UniProtKB-SubCell"/>
</dbReference>
<dbReference type="GO" id="GO:0048613">
    <property type="term" value="P:embryonic ectodermal digestive tract morphogenesis"/>
    <property type="evidence" value="ECO:0000315"/>
    <property type="project" value="UniProtKB"/>
</dbReference>
<dbReference type="GO" id="GO:0006897">
    <property type="term" value="P:endocytosis"/>
    <property type="evidence" value="ECO:0007669"/>
    <property type="project" value="UniProtKB-KW"/>
</dbReference>
<dbReference type="GO" id="GO:1904703">
    <property type="term" value="P:negative regulation of protein localization to adherens junction"/>
    <property type="evidence" value="ECO:0000316"/>
    <property type="project" value="UniProtKB"/>
</dbReference>
<dbReference type="GO" id="GO:2000370">
    <property type="term" value="P:positive regulation of clathrin-dependent endocytosis"/>
    <property type="evidence" value="ECO:0000315"/>
    <property type="project" value="UniProtKB"/>
</dbReference>
<dbReference type="GO" id="GO:1901046">
    <property type="term" value="P:positive regulation of egg-laying behavior"/>
    <property type="evidence" value="ECO:0000315"/>
    <property type="project" value="UniProtKB"/>
</dbReference>
<dbReference type="GO" id="GO:0032956">
    <property type="term" value="P:regulation of actin cytoskeleton organization"/>
    <property type="evidence" value="ECO:0000316"/>
    <property type="project" value="UniProtKB"/>
</dbReference>
<dbReference type="GO" id="GO:0007165">
    <property type="term" value="P:signal transduction"/>
    <property type="evidence" value="ECO:0007669"/>
    <property type="project" value="InterPro"/>
</dbReference>
<dbReference type="CDD" id="cd07653">
    <property type="entry name" value="F-BAR_CIP4-like"/>
    <property type="match status" value="1"/>
</dbReference>
<dbReference type="CDD" id="cd11619">
    <property type="entry name" value="HR1_CIP4-like"/>
    <property type="match status" value="1"/>
</dbReference>
<dbReference type="CDD" id="cd11911">
    <property type="entry name" value="SH3_CIP4-like"/>
    <property type="match status" value="1"/>
</dbReference>
<dbReference type="FunFam" id="1.20.1270.60:FF:000060">
    <property type="entry name" value="Actin polymerization protein Bzz1"/>
    <property type="match status" value="1"/>
</dbReference>
<dbReference type="FunFam" id="2.30.30.40:FF:000203">
    <property type="entry name" value="Cdc42-interacting protein 4, isoform F"/>
    <property type="match status" value="1"/>
</dbReference>
<dbReference type="Gene3D" id="6.10.140.470">
    <property type="match status" value="1"/>
</dbReference>
<dbReference type="Gene3D" id="1.20.1270.60">
    <property type="entry name" value="Arfaptin homology (AH) domain/BAR domain"/>
    <property type="match status" value="1"/>
</dbReference>
<dbReference type="Gene3D" id="2.30.30.40">
    <property type="entry name" value="SH3 Domains"/>
    <property type="match status" value="1"/>
</dbReference>
<dbReference type="InterPro" id="IPR027267">
    <property type="entry name" value="AH/BAR_dom_sf"/>
</dbReference>
<dbReference type="InterPro" id="IPR031160">
    <property type="entry name" value="F_BAR"/>
</dbReference>
<dbReference type="InterPro" id="IPR001060">
    <property type="entry name" value="FCH_dom"/>
</dbReference>
<dbReference type="InterPro" id="IPR011072">
    <property type="entry name" value="HR1_rho-bd"/>
</dbReference>
<dbReference type="InterPro" id="IPR036028">
    <property type="entry name" value="SH3-like_dom_sf"/>
</dbReference>
<dbReference type="InterPro" id="IPR001452">
    <property type="entry name" value="SH3_domain"/>
</dbReference>
<dbReference type="PANTHER" id="PTHR15735">
    <property type="entry name" value="FCH AND DOUBLE SH3 DOMAINS PROTEIN"/>
    <property type="match status" value="1"/>
</dbReference>
<dbReference type="PANTHER" id="PTHR15735:SF16">
    <property type="entry name" value="TRANSDUCER OF CDC42-DEPENDENT ACTIN ASSEMBLY PROTEIN 2 HOMOLOG"/>
    <property type="match status" value="1"/>
</dbReference>
<dbReference type="Pfam" id="PF00611">
    <property type="entry name" value="FCH"/>
    <property type="match status" value="1"/>
</dbReference>
<dbReference type="Pfam" id="PF00018">
    <property type="entry name" value="SH3_1"/>
    <property type="match status" value="1"/>
</dbReference>
<dbReference type="SMART" id="SM00055">
    <property type="entry name" value="FCH"/>
    <property type="match status" value="1"/>
</dbReference>
<dbReference type="SMART" id="SM00326">
    <property type="entry name" value="SH3"/>
    <property type="match status" value="1"/>
</dbReference>
<dbReference type="SUPFAM" id="SSF103657">
    <property type="entry name" value="BAR/IMD domain-like"/>
    <property type="match status" value="1"/>
</dbReference>
<dbReference type="SUPFAM" id="SSF50044">
    <property type="entry name" value="SH3-domain"/>
    <property type="match status" value="1"/>
</dbReference>
<dbReference type="PROSITE" id="PS51741">
    <property type="entry name" value="F_BAR"/>
    <property type="match status" value="1"/>
</dbReference>
<dbReference type="PROSITE" id="PS51860">
    <property type="entry name" value="REM_1"/>
    <property type="match status" value="1"/>
</dbReference>
<dbReference type="PROSITE" id="PS50002">
    <property type="entry name" value="SH3"/>
    <property type="match status" value="1"/>
</dbReference>
<proteinExistence type="evidence at protein level"/>